<reference key="1">
    <citation type="journal article" date="2005" name="Genome Res.">
        <title>Sequence, annotation, and analysis of synteny between rice chromosome 3 and diverged grass species.</title>
        <authorList>
            <consortium name="The rice chromosome 3 sequencing consortium"/>
            <person name="Buell C.R."/>
            <person name="Yuan Q."/>
            <person name="Ouyang S."/>
            <person name="Liu J."/>
            <person name="Zhu W."/>
            <person name="Wang A."/>
            <person name="Maiti R."/>
            <person name="Haas B."/>
            <person name="Wortman J."/>
            <person name="Pertea M."/>
            <person name="Jones K.M."/>
            <person name="Kim M."/>
            <person name="Overton L."/>
            <person name="Tsitrin T."/>
            <person name="Fadrosh D."/>
            <person name="Bera J."/>
            <person name="Weaver B."/>
            <person name="Jin S."/>
            <person name="Johri S."/>
            <person name="Reardon M."/>
            <person name="Webb K."/>
            <person name="Hill J."/>
            <person name="Moffat K."/>
            <person name="Tallon L."/>
            <person name="Van Aken S."/>
            <person name="Lewis M."/>
            <person name="Utterback T."/>
            <person name="Feldblyum T."/>
            <person name="Zismann V."/>
            <person name="Iobst S."/>
            <person name="Hsiao J."/>
            <person name="de Vazeille A.R."/>
            <person name="Salzberg S.L."/>
            <person name="White O."/>
            <person name="Fraser C.M."/>
            <person name="Yu Y."/>
            <person name="Kim H."/>
            <person name="Rambo T."/>
            <person name="Currie J."/>
            <person name="Collura K."/>
            <person name="Kernodle-Thompson S."/>
            <person name="Wei F."/>
            <person name="Kudrna K."/>
            <person name="Ammiraju J.S.S."/>
            <person name="Luo M."/>
            <person name="Goicoechea J.L."/>
            <person name="Wing R.A."/>
            <person name="Henry D."/>
            <person name="Oates R."/>
            <person name="Palmer M."/>
            <person name="Pries G."/>
            <person name="Saski C."/>
            <person name="Simmons J."/>
            <person name="Soderlund C."/>
            <person name="Nelson W."/>
            <person name="de la Bastide M."/>
            <person name="Spiegel L."/>
            <person name="Nascimento L."/>
            <person name="Huang E."/>
            <person name="Preston R."/>
            <person name="Zutavern T."/>
            <person name="Palmer L."/>
            <person name="O'Shaughnessy A."/>
            <person name="Dike S."/>
            <person name="McCombie W.R."/>
            <person name="Minx P."/>
            <person name="Cordum H."/>
            <person name="Wilson R."/>
            <person name="Jin W."/>
            <person name="Lee H.R."/>
            <person name="Jiang J."/>
            <person name="Jackson S."/>
        </authorList>
    </citation>
    <scope>NUCLEOTIDE SEQUENCE [LARGE SCALE GENOMIC DNA]</scope>
    <source>
        <strain>cv. Nipponbare</strain>
    </source>
</reference>
<reference key="2">
    <citation type="journal article" date="2005" name="Nature">
        <title>The map-based sequence of the rice genome.</title>
        <authorList>
            <consortium name="International rice genome sequencing project (IRGSP)"/>
        </authorList>
    </citation>
    <scope>NUCLEOTIDE SEQUENCE [LARGE SCALE GENOMIC DNA]</scope>
    <source>
        <strain>cv. Nipponbare</strain>
    </source>
</reference>
<reference key="3">
    <citation type="journal article" date="2008" name="Nucleic Acids Res.">
        <title>The rice annotation project database (RAP-DB): 2008 update.</title>
        <authorList>
            <consortium name="The rice annotation project (RAP)"/>
        </authorList>
    </citation>
    <scope>GENOME REANNOTATION</scope>
    <source>
        <strain>cv. Nipponbare</strain>
    </source>
</reference>
<reference key="4">
    <citation type="journal article" date="2013" name="Rice">
        <title>Improvement of the Oryza sativa Nipponbare reference genome using next generation sequence and optical map data.</title>
        <authorList>
            <person name="Kawahara Y."/>
            <person name="de la Bastide M."/>
            <person name="Hamilton J.P."/>
            <person name="Kanamori H."/>
            <person name="McCombie W.R."/>
            <person name="Ouyang S."/>
            <person name="Schwartz D.C."/>
            <person name="Tanaka T."/>
            <person name="Wu J."/>
            <person name="Zhou S."/>
            <person name="Childs K.L."/>
            <person name="Davidson R.M."/>
            <person name="Lin H."/>
            <person name="Quesada-Ocampo L."/>
            <person name="Vaillancourt B."/>
            <person name="Sakai H."/>
            <person name="Lee S.S."/>
            <person name="Kim J."/>
            <person name="Numa H."/>
            <person name="Itoh T."/>
            <person name="Buell C.R."/>
            <person name="Matsumoto T."/>
        </authorList>
    </citation>
    <scope>GENOME REANNOTATION</scope>
    <source>
        <strain>cv. Nipponbare</strain>
    </source>
</reference>
<reference key="5">
    <citation type="journal article" date="2005" name="PLoS Biol.">
        <title>The genomes of Oryza sativa: a history of duplications.</title>
        <authorList>
            <person name="Yu J."/>
            <person name="Wang J."/>
            <person name="Lin W."/>
            <person name="Li S."/>
            <person name="Li H."/>
            <person name="Zhou J."/>
            <person name="Ni P."/>
            <person name="Dong W."/>
            <person name="Hu S."/>
            <person name="Zeng C."/>
            <person name="Zhang J."/>
            <person name="Zhang Y."/>
            <person name="Li R."/>
            <person name="Xu Z."/>
            <person name="Li S."/>
            <person name="Li X."/>
            <person name="Zheng H."/>
            <person name="Cong L."/>
            <person name="Lin L."/>
            <person name="Yin J."/>
            <person name="Geng J."/>
            <person name="Li G."/>
            <person name="Shi J."/>
            <person name="Liu J."/>
            <person name="Lv H."/>
            <person name="Li J."/>
            <person name="Wang J."/>
            <person name="Deng Y."/>
            <person name="Ran L."/>
            <person name="Shi X."/>
            <person name="Wang X."/>
            <person name="Wu Q."/>
            <person name="Li C."/>
            <person name="Ren X."/>
            <person name="Wang J."/>
            <person name="Wang X."/>
            <person name="Li D."/>
            <person name="Liu D."/>
            <person name="Zhang X."/>
            <person name="Ji Z."/>
            <person name="Zhao W."/>
            <person name="Sun Y."/>
            <person name="Zhang Z."/>
            <person name="Bao J."/>
            <person name="Han Y."/>
            <person name="Dong L."/>
            <person name="Ji J."/>
            <person name="Chen P."/>
            <person name="Wu S."/>
            <person name="Liu J."/>
            <person name="Xiao Y."/>
            <person name="Bu D."/>
            <person name="Tan J."/>
            <person name="Yang L."/>
            <person name="Ye C."/>
            <person name="Zhang J."/>
            <person name="Xu J."/>
            <person name="Zhou Y."/>
            <person name="Yu Y."/>
            <person name="Zhang B."/>
            <person name="Zhuang S."/>
            <person name="Wei H."/>
            <person name="Liu B."/>
            <person name="Lei M."/>
            <person name="Yu H."/>
            <person name="Li Y."/>
            <person name="Xu H."/>
            <person name="Wei S."/>
            <person name="He X."/>
            <person name="Fang L."/>
            <person name="Zhang Z."/>
            <person name="Zhang Y."/>
            <person name="Huang X."/>
            <person name="Su Z."/>
            <person name="Tong W."/>
            <person name="Li J."/>
            <person name="Tong Z."/>
            <person name="Li S."/>
            <person name="Ye J."/>
            <person name="Wang L."/>
            <person name="Fang L."/>
            <person name="Lei T."/>
            <person name="Chen C.-S."/>
            <person name="Chen H.-C."/>
            <person name="Xu Z."/>
            <person name="Li H."/>
            <person name="Huang H."/>
            <person name="Zhang F."/>
            <person name="Xu H."/>
            <person name="Li N."/>
            <person name="Zhao C."/>
            <person name="Li S."/>
            <person name="Dong L."/>
            <person name="Huang Y."/>
            <person name="Li L."/>
            <person name="Xi Y."/>
            <person name="Qi Q."/>
            <person name="Li W."/>
            <person name="Zhang B."/>
            <person name="Hu W."/>
            <person name="Zhang Y."/>
            <person name="Tian X."/>
            <person name="Jiao Y."/>
            <person name="Liang X."/>
            <person name="Jin J."/>
            <person name="Gao L."/>
            <person name="Zheng W."/>
            <person name="Hao B."/>
            <person name="Liu S.-M."/>
            <person name="Wang W."/>
            <person name="Yuan L."/>
            <person name="Cao M."/>
            <person name="McDermott J."/>
            <person name="Samudrala R."/>
            <person name="Wang J."/>
            <person name="Wong G.K.-S."/>
            <person name="Yang H."/>
        </authorList>
    </citation>
    <scope>NUCLEOTIDE SEQUENCE [LARGE SCALE GENOMIC DNA]</scope>
    <source>
        <strain>cv. Nipponbare</strain>
    </source>
</reference>
<reference key="6">
    <citation type="journal article" date="2003" name="Science">
        <title>Collection, mapping, and annotation of over 28,000 cDNA clones from japonica rice.</title>
        <authorList>
            <consortium name="The rice full-length cDNA consortium"/>
        </authorList>
    </citation>
    <scope>NUCLEOTIDE SEQUENCE [LARGE SCALE MRNA]</scope>
    <source>
        <strain>cv. Nipponbare</strain>
    </source>
</reference>
<reference key="7">
    <citation type="journal article" date="2009" name="Mol. Plant Microbe Interact.">
        <title>Suppression of the rice fatty-acid desaturase gene OsSSI2 enhances resistance to blast and leaf blight diseases in rice.</title>
        <authorList>
            <person name="Jiang C.J."/>
            <person name="Shimono M."/>
            <person name="Maeda S."/>
            <person name="Inoue H."/>
            <person name="Mori M."/>
            <person name="Hasegawa M."/>
            <person name="Sugano S."/>
            <person name="Takatsuji H."/>
        </authorList>
    </citation>
    <scope>GENE FAMILY</scope>
</reference>
<dbReference type="EC" id="1.14.19.-"/>
<dbReference type="EMBL" id="AC114983">
    <property type="protein sequence ID" value="AAP20854.1"/>
    <property type="molecule type" value="Genomic_DNA"/>
</dbReference>
<dbReference type="EMBL" id="DP000009">
    <property type="protein sequence ID" value="ABF96687.1"/>
    <property type="molecule type" value="Genomic_DNA"/>
</dbReference>
<dbReference type="EMBL" id="AP008209">
    <property type="protein sequence ID" value="BAF12307.1"/>
    <property type="molecule type" value="Genomic_DNA"/>
</dbReference>
<dbReference type="EMBL" id="AP014959">
    <property type="protein sequence ID" value="BAS84757.1"/>
    <property type="molecule type" value="Genomic_DNA"/>
</dbReference>
<dbReference type="EMBL" id="CM000140">
    <property type="protein sequence ID" value="EAZ27374.1"/>
    <property type="molecule type" value="Genomic_DNA"/>
</dbReference>
<dbReference type="EMBL" id="AK070282">
    <property type="status" value="NOT_ANNOTATED_CDS"/>
    <property type="molecule type" value="mRNA"/>
</dbReference>
<dbReference type="RefSeq" id="XP_015629339.1">
    <property type="nucleotide sequence ID" value="XM_015773853.1"/>
</dbReference>
<dbReference type="SMR" id="Q84MF1"/>
<dbReference type="FunCoup" id="Q84MF1">
    <property type="interactions" value="55"/>
</dbReference>
<dbReference type="STRING" id="39947.Q84MF1"/>
<dbReference type="PaxDb" id="39947-Q84MF1"/>
<dbReference type="EnsemblPlants" id="Os03t0423300-01">
    <property type="protein sequence ID" value="Os03t0423300-01"/>
    <property type="gene ID" value="Os03g0423300"/>
</dbReference>
<dbReference type="Gramene" id="Os03t0423300-01">
    <property type="protein sequence ID" value="Os03t0423300-01"/>
    <property type="gene ID" value="Os03g0423300"/>
</dbReference>
<dbReference type="KEGG" id="dosa:Os03g0423300"/>
<dbReference type="eggNOG" id="ENOG502QRJK">
    <property type="taxonomic scope" value="Eukaryota"/>
</dbReference>
<dbReference type="HOGENOM" id="CLU_034505_1_0_1"/>
<dbReference type="InParanoid" id="Q84MF1"/>
<dbReference type="OMA" id="DSAWQPH"/>
<dbReference type="OrthoDB" id="667800at2759"/>
<dbReference type="UniPathway" id="UPA00199"/>
<dbReference type="Proteomes" id="UP000000763">
    <property type="component" value="Chromosome 3"/>
</dbReference>
<dbReference type="Proteomes" id="UP000007752">
    <property type="component" value="Chromosome 3"/>
</dbReference>
<dbReference type="Proteomes" id="UP000059680">
    <property type="component" value="Chromosome 3"/>
</dbReference>
<dbReference type="GO" id="GO:0009507">
    <property type="term" value="C:chloroplast"/>
    <property type="evidence" value="ECO:0007669"/>
    <property type="project" value="UniProtKB-SubCell"/>
</dbReference>
<dbReference type="GO" id="GO:0046872">
    <property type="term" value="F:metal ion binding"/>
    <property type="evidence" value="ECO:0007669"/>
    <property type="project" value="UniProtKB-KW"/>
</dbReference>
<dbReference type="GO" id="GO:0045300">
    <property type="term" value="F:stearoyl-[ACP] desaturase activity"/>
    <property type="evidence" value="ECO:0000318"/>
    <property type="project" value="GO_Central"/>
</dbReference>
<dbReference type="GO" id="GO:0006633">
    <property type="term" value="P:fatty acid biosynthetic process"/>
    <property type="evidence" value="ECO:0007669"/>
    <property type="project" value="UniProtKB-KW"/>
</dbReference>
<dbReference type="GO" id="GO:0006631">
    <property type="term" value="P:fatty acid metabolic process"/>
    <property type="evidence" value="ECO:0000318"/>
    <property type="project" value="GO_Central"/>
</dbReference>
<dbReference type="CDD" id="cd01050">
    <property type="entry name" value="Acyl_ACP_Desat"/>
    <property type="match status" value="1"/>
</dbReference>
<dbReference type="FunFam" id="1.10.620.20:FF:000002">
    <property type="entry name" value="Stearoyl-[acyl-carrier-protein] 9-desaturase, chloroplastic"/>
    <property type="match status" value="1"/>
</dbReference>
<dbReference type="Gene3D" id="1.10.620.20">
    <property type="entry name" value="Ribonucleotide Reductase, subunit A"/>
    <property type="match status" value="1"/>
</dbReference>
<dbReference type="InterPro" id="IPR005067">
    <property type="entry name" value="Fatty_acid_desaturase-2"/>
</dbReference>
<dbReference type="InterPro" id="IPR009078">
    <property type="entry name" value="Ferritin-like_SF"/>
</dbReference>
<dbReference type="InterPro" id="IPR012348">
    <property type="entry name" value="RNR-like"/>
</dbReference>
<dbReference type="PANTHER" id="PTHR31155">
    <property type="entry name" value="ACYL- ACYL-CARRIER-PROTEIN DESATURASE-RELATED"/>
    <property type="match status" value="1"/>
</dbReference>
<dbReference type="PANTHER" id="PTHR31155:SF22">
    <property type="entry name" value="ACYL-[ACYL-CARRIER-PROTEIN] DESATURASE 4, CHLOROPLASTIC"/>
    <property type="match status" value="1"/>
</dbReference>
<dbReference type="Pfam" id="PF03405">
    <property type="entry name" value="FA_desaturase_2"/>
    <property type="match status" value="1"/>
</dbReference>
<dbReference type="PIRSF" id="PIRSF000346">
    <property type="entry name" value="Dlt9_acylACP_des"/>
    <property type="match status" value="1"/>
</dbReference>
<dbReference type="SUPFAM" id="SSF47240">
    <property type="entry name" value="Ferritin-like"/>
    <property type="match status" value="1"/>
</dbReference>
<proteinExistence type="evidence at transcript level"/>
<sequence>MASSGLAVAATASSAWLCCPNHHIHTSSSRSRKHLLLHGLYGSAPARTRGRRPPVWTAAAATAAAPADTAASARREQVEIARSLNAWVEENMLPLLTPVDSAWQPHDFLPCSAAGGGEALAAFTEGVAELRAGAAGVPDEVLVCLVGNMVTEEALPTYQSMGNRAEGLADGTGVSPLPWARWLRGWTAEENRHGDLLNRYLYLSGRVDMRQVEATVHRLLRNGMEMLAPASPYHGLIYGAFQERATFISHGHTARLAGQHGDRALAKICGVIAADERRHEAGYTMASGRLFELDPDGMARALADVMRGKVTMPGQLMSDGRDGDGEHSLFARFSAVAERAGVYTARDYGDLVEHFVRRWRVAELAAGLSGEGRRAQEYLCGLAPKIRRMEELAHRRAARIEPAMARFSWIFDRPVMLG</sequence>
<gene>
    <name type="ordered locus">Os03g0423300</name>
    <name type="ordered locus">LOC_Os03g30950</name>
    <name type="ORF">OsJ_11322</name>
    <name type="ORF">OSJNBa0032H19</name>
</gene>
<organism>
    <name type="scientific">Oryza sativa subsp. japonica</name>
    <name type="common">Rice</name>
    <dbReference type="NCBI Taxonomy" id="39947"/>
    <lineage>
        <taxon>Eukaryota</taxon>
        <taxon>Viridiplantae</taxon>
        <taxon>Streptophyta</taxon>
        <taxon>Embryophyta</taxon>
        <taxon>Tracheophyta</taxon>
        <taxon>Spermatophyta</taxon>
        <taxon>Magnoliopsida</taxon>
        <taxon>Liliopsida</taxon>
        <taxon>Poales</taxon>
        <taxon>Poaceae</taxon>
        <taxon>BOP clade</taxon>
        <taxon>Oryzoideae</taxon>
        <taxon>Oryzeae</taxon>
        <taxon>Oryzinae</taxon>
        <taxon>Oryza</taxon>
        <taxon>Oryza sativa</taxon>
    </lineage>
</organism>
<keyword id="KW-0150">Chloroplast</keyword>
<keyword id="KW-0275">Fatty acid biosynthesis</keyword>
<keyword id="KW-0276">Fatty acid metabolism</keyword>
<keyword id="KW-0408">Iron</keyword>
<keyword id="KW-0444">Lipid biosynthesis</keyword>
<keyword id="KW-0443">Lipid metabolism</keyword>
<keyword id="KW-0479">Metal-binding</keyword>
<keyword id="KW-0560">Oxidoreductase</keyword>
<keyword id="KW-0934">Plastid</keyword>
<keyword id="KW-1185">Reference proteome</keyword>
<keyword id="KW-0809">Transit peptide</keyword>
<protein>
    <recommendedName>
        <fullName>Acyl-[acyl-carrier-protein] desaturase 4, chloroplastic</fullName>
        <ecNumber>1.14.19.-</ecNumber>
    </recommendedName>
</protein>
<evidence type="ECO:0000250" key="1">
    <source>
        <dbReference type="UniProtKB" id="P22337"/>
    </source>
</evidence>
<evidence type="ECO:0000255" key="2"/>
<evidence type="ECO:0000305" key="3"/>
<comment type="function">
    <text evidence="3">Introduces a cis double bond in the acyl chain of an acyl-[acyl-carrier protein].</text>
</comment>
<comment type="cofactor">
    <cofactor evidence="1">
        <name>Fe(2+)</name>
        <dbReference type="ChEBI" id="CHEBI:29033"/>
    </cofactor>
    <text evidence="1">Binds 2 Fe(2+) ions per subunit.</text>
</comment>
<comment type="pathway">
    <text>Lipid metabolism; fatty acid metabolism.</text>
</comment>
<comment type="subunit">
    <text evidence="1">Homodimer.</text>
</comment>
<comment type="subcellular location">
    <subcellularLocation>
        <location evidence="3">Plastid</location>
        <location evidence="3">Chloroplast</location>
    </subcellularLocation>
</comment>
<comment type="similarity">
    <text evidence="3">Belongs to the fatty acid desaturase type 2 family.</text>
</comment>
<name>STAD4_ORYSJ</name>
<accession>Q84MF1</accession>
<accession>A0A0P0VYV7</accession>
<accession>A3AJ85</accession>
<feature type="transit peptide" description="Chloroplast" evidence="2">
    <location>
        <begin position="1"/>
        <end position="70"/>
    </location>
</feature>
<feature type="chain" id="PRO_0000401432" description="Acyl-[acyl-carrier-protein] desaturase 4, chloroplastic">
    <location>
        <begin position="71"/>
        <end position="418"/>
    </location>
</feature>
<feature type="binding site" evidence="1">
    <location>
        <position position="152"/>
    </location>
    <ligand>
        <name>Fe cation</name>
        <dbReference type="ChEBI" id="CHEBI:24875"/>
        <label>1</label>
    </ligand>
</feature>
<feature type="binding site" evidence="1">
    <location>
        <position position="190"/>
    </location>
    <ligand>
        <name>Fe cation</name>
        <dbReference type="ChEBI" id="CHEBI:24875"/>
        <label>1</label>
    </ligand>
</feature>
<feature type="binding site" evidence="1">
    <location>
        <position position="190"/>
    </location>
    <ligand>
        <name>Fe cation</name>
        <dbReference type="ChEBI" id="CHEBI:24875"/>
        <label>2</label>
    </ligand>
</feature>
<feature type="binding site" evidence="1">
    <location>
        <position position="193"/>
    </location>
    <ligand>
        <name>Fe cation</name>
        <dbReference type="ChEBI" id="CHEBI:24875"/>
        <label>1</label>
    </ligand>
</feature>
<feature type="binding site" evidence="1">
    <location>
        <position position="243"/>
    </location>
    <ligand>
        <name>Fe cation</name>
        <dbReference type="ChEBI" id="CHEBI:24875"/>
        <label>2</label>
    </ligand>
</feature>
<feature type="binding site" evidence="1">
    <location>
        <position position="276"/>
    </location>
    <ligand>
        <name>Fe cation</name>
        <dbReference type="ChEBI" id="CHEBI:24875"/>
        <label>1</label>
    </ligand>
</feature>
<feature type="binding site" evidence="1">
    <location>
        <position position="276"/>
    </location>
    <ligand>
        <name>Fe cation</name>
        <dbReference type="ChEBI" id="CHEBI:24875"/>
        <label>2</label>
    </ligand>
</feature>
<feature type="binding site" evidence="1">
    <location>
        <position position="279"/>
    </location>
    <ligand>
        <name>Fe cation</name>
        <dbReference type="ChEBI" id="CHEBI:24875"/>
        <label>2</label>
    </ligand>
</feature>
<feature type="sequence conflict" description="In Ref. 5; EAZ27374." evidence="3" ref="5">
    <original>L</original>
    <variation>I</variation>
    <location>
        <position position="177"/>
    </location>
</feature>
<feature type="sequence conflict" description="In Ref. 6; AK070282." evidence="3" ref="6">
    <original>R</original>
    <variation>S</variation>
    <location>
        <position position="192"/>
    </location>
</feature>